<reference key="1">
    <citation type="journal article" date="2002" name="Proteomics">
        <title>Comparative proteome bioinformatics: identification of a whole complement of putative protein tyrosine kinases in the model flowering plant Arabidopsis thaliana.</title>
        <authorList>
            <person name="Carpi A."/>
            <person name="Di Maira G."/>
            <person name="Vedovato M."/>
            <person name="Rossi V."/>
            <person name="Naccari T."/>
            <person name="Floriduz M."/>
            <person name="Terzi M."/>
            <person name="Filippini F."/>
        </authorList>
    </citation>
    <scope>NUCLEOTIDE SEQUENCE [MRNA]</scope>
    <source>
        <strain>cv. Columbia</strain>
    </source>
</reference>
<reference key="2">
    <citation type="journal article" date="1999" name="Nature">
        <title>Sequence and analysis of chromosome 2 of the plant Arabidopsis thaliana.</title>
        <authorList>
            <person name="Lin X."/>
            <person name="Kaul S."/>
            <person name="Rounsley S.D."/>
            <person name="Shea T.P."/>
            <person name="Benito M.-I."/>
            <person name="Town C.D."/>
            <person name="Fujii C.Y."/>
            <person name="Mason T.M."/>
            <person name="Bowman C.L."/>
            <person name="Barnstead M.E."/>
            <person name="Feldblyum T.V."/>
            <person name="Buell C.R."/>
            <person name="Ketchum K.A."/>
            <person name="Lee J.J."/>
            <person name="Ronning C.M."/>
            <person name="Koo H.L."/>
            <person name="Moffat K.S."/>
            <person name="Cronin L.A."/>
            <person name="Shen M."/>
            <person name="Pai G."/>
            <person name="Van Aken S."/>
            <person name="Umayam L."/>
            <person name="Tallon L.J."/>
            <person name="Gill J.E."/>
            <person name="Adams M.D."/>
            <person name="Carrera A.J."/>
            <person name="Creasy T.H."/>
            <person name="Goodman H.M."/>
            <person name="Somerville C.R."/>
            <person name="Copenhaver G.P."/>
            <person name="Preuss D."/>
            <person name="Nierman W.C."/>
            <person name="White O."/>
            <person name="Eisen J.A."/>
            <person name="Salzberg S.L."/>
            <person name="Fraser C.M."/>
            <person name="Venter J.C."/>
        </authorList>
    </citation>
    <scope>NUCLEOTIDE SEQUENCE [LARGE SCALE GENOMIC DNA]</scope>
    <source>
        <strain>cv. Columbia</strain>
    </source>
</reference>
<reference key="3">
    <citation type="journal article" date="2017" name="Plant J.">
        <title>Araport11: a complete reannotation of the Arabidopsis thaliana reference genome.</title>
        <authorList>
            <person name="Cheng C.Y."/>
            <person name="Krishnakumar V."/>
            <person name="Chan A.P."/>
            <person name="Thibaud-Nissen F."/>
            <person name="Schobel S."/>
            <person name="Town C.D."/>
        </authorList>
    </citation>
    <scope>GENOME REANNOTATION</scope>
    <source>
        <strain>cv. Columbia</strain>
    </source>
</reference>
<reference key="4">
    <citation type="submission" date="2006-03" db="EMBL/GenBank/DDBJ databases">
        <title>Arabidopsis ORF clones.</title>
        <authorList>
            <person name="Shinn P."/>
            <person name="Chen H."/>
            <person name="Kim C.J."/>
            <person name="Ecker J.R."/>
        </authorList>
    </citation>
    <scope>NUCLEOTIDE SEQUENCE [LARGE SCALE MRNA]</scope>
    <source>
        <strain>cv. Columbia</strain>
    </source>
</reference>
<reference key="5">
    <citation type="submission" date="2006-07" db="EMBL/GenBank/DDBJ databases">
        <title>Large-scale analysis of RIKEN Arabidopsis full-length (RAFL) cDNAs.</title>
        <authorList>
            <person name="Totoki Y."/>
            <person name="Seki M."/>
            <person name="Ishida J."/>
            <person name="Nakajima M."/>
            <person name="Enju A."/>
            <person name="Kamiya A."/>
            <person name="Narusaka M."/>
            <person name="Shin-i T."/>
            <person name="Nakagawa M."/>
            <person name="Sakamoto N."/>
            <person name="Oishi K."/>
            <person name="Kohara Y."/>
            <person name="Kobayashi M."/>
            <person name="Toyoda A."/>
            <person name="Sakaki Y."/>
            <person name="Sakurai T."/>
            <person name="Iida K."/>
            <person name="Akiyama K."/>
            <person name="Satou M."/>
            <person name="Toyoda T."/>
            <person name="Konagaya A."/>
            <person name="Carninci P."/>
            <person name="Kawai J."/>
            <person name="Hayashizaki Y."/>
            <person name="Shinozaki K."/>
        </authorList>
    </citation>
    <scope>NUCLEOTIDE SEQUENCE [LARGE SCALE MRNA]</scope>
    <source>
        <strain>cv. Columbia</strain>
    </source>
</reference>
<reference key="6">
    <citation type="journal article" date="2006" name="J. Biol. Chem.">
        <title>The Arabidopsis protein kinase PTI1-2 is activated by convergent phosphatidic acid and oxidative stress signaling pathways downstream of PDK1 and OXI1.</title>
        <authorList>
            <person name="Anthony R.G."/>
            <person name="Khan S."/>
            <person name="Costa J."/>
            <person name="Pais M.S."/>
            <person name="Boegre L."/>
        </authorList>
    </citation>
    <scope>FUNCTION</scope>
    <scope>INTERACTION WITH OXI1</scope>
    <scope>AUTOPHOSPHORYLATION</scope>
    <scope>PHOSPHORYLATION BY OXI1</scope>
    <scope>MUTAGENESIS OF LYS-99 AND THR-238</scope>
    <scope>ACTIVITY REGULATION</scope>
</reference>
<protein>
    <recommendedName>
        <fullName>PTI1-like tyrosine-protein kinase 2</fullName>
        <shortName>PTI1-2</shortName>
        <ecNumber>2.7.10.2</ecNumber>
    </recommendedName>
</protein>
<keyword id="KW-0067">ATP-binding</keyword>
<keyword id="KW-0418">Kinase</keyword>
<keyword id="KW-0547">Nucleotide-binding</keyword>
<keyword id="KW-0597">Phosphoprotein</keyword>
<keyword id="KW-0611">Plant defense</keyword>
<keyword id="KW-1185">Reference proteome</keyword>
<keyword id="KW-0808">Transferase</keyword>
<keyword id="KW-0829">Tyrosine-protein kinase</keyword>
<organism>
    <name type="scientific">Arabidopsis thaliana</name>
    <name type="common">Mouse-ear cress</name>
    <dbReference type="NCBI Taxonomy" id="3702"/>
    <lineage>
        <taxon>Eukaryota</taxon>
        <taxon>Viridiplantae</taxon>
        <taxon>Streptophyta</taxon>
        <taxon>Embryophyta</taxon>
        <taxon>Tracheophyta</taxon>
        <taxon>Spermatophyta</taxon>
        <taxon>Magnoliopsida</taxon>
        <taxon>eudicotyledons</taxon>
        <taxon>Gunneridae</taxon>
        <taxon>Pentapetalae</taxon>
        <taxon>rosids</taxon>
        <taxon>malvids</taxon>
        <taxon>Brassicales</taxon>
        <taxon>Brassicaceae</taxon>
        <taxon>Camelineae</taxon>
        <taxon>Arabidopsis</taxon>
    </lineage>
</organism>
<sequence length="366" mass="40500">MRRWICCGDKKGDSDLSNEEVHLKSPWQNSEANQKNQKPQAVVKPEAQKEALPIEVPPLSVDEVKEKTDNFGSKSLIGEGSYGRVYYATLNDGKAVALKKLDVAPEAETNTEFLNQVSMVSRLKHENLIQLVGYCVDENLRVLAYEFATMGSLHDILHGRKGVQGAQPGPTLDWLTRVKIAVEAARGLEYLHEKVQPPVIHRDIRSSNVLLFEDYQAKVADFNLSNQAPDNAARLHSTRVLGTFGYHAPEYAMTGQLTQKSDVYSFGVVLLELLTGRKPVDHTMPRGQQSLVTWATPRLSEDKVKQCVDPKLKGEYPPKSVAKLAAVAALCVQYESEFRPNMSIVVKALQPLLKPPAPAPAPVPES</sequence>
<proteinExistence type="evidence at protein level"/>
<dbReference type="EC" id="2.7.10.2"/>
<dbReference type="EMBL" id="AJ303007">
    <property type="protein sequence ID" value="CAC34450.1"/>
    <property type="molecule type" value="mRNA"/>
</dbReference>
<dbReference type="EMBL" id="AC002340">
    <property type="protein sequence ID" value="AAC02745.1"/>
    <property type="molecule type" value="Genomic_DNA"/>
</dbReference>
<dbReference type="EMBL" id="CP002685">
    <property type="protein sequence ID" value="AEC08434.1"/>
    <property type="molecule type" value="Genomic_DNA"/>
</dbReference>
<dbReference type="EMBL" id="CP002685">
    <property type="protein sequence ID" value="ANM62808.1"/>
    <property type="molecule type" value="Genomic_DNA"/>
</dbReference>
<dbReference type="EMBL" id="CP002685">
    <property type="protein sequence ID" value="ANM62809.1"/>
    <property type="molecule type" value="Genomic_DNA"/>
</dbReference>
<dbReference type="EMBL" id="CP002685">
    <property type="protein sequence ID" value="ANM62810.1"/>
    <property type="molecule type" value="Genomic_DNA"/>
</dbReference>
<dbReference type="EMBL" id="CP002685">
    <property type="protein sequence ID" value="ANM62811.1"/>
    <property type="molecule type" value="Genomic_DNA"/>
</dbReference>
<dbReference type="EMBL" id="CP002685">
    <property type="protein sequence ID" value="ANM62812.1"/>
    <property type="molecule type" value="Genomic_DNA"/>
</dbReference>
<dbReference type="EMBL" id="CP002685">
    <property type="protein sequence ID" value="ANM62813.1"/>
    <property type="molecule type" value="Genomic_DNA"/>
</dbReference>
<dbReference type="EMBL" id="CP002685">
    <property type="protein sequence ID" value="ANM62814.1"/>
    <property type="molecule type" value="Genomic_DNA"/>
</dbReference>
<dbReference type="EMBL" id="CP002685">
    <property type="protein sequence ID" value="ANM62815.1"/>
    <property type="molecule type" value="Genomic_DNA"/>
</dbReference>
<dbReference type="EMBL" id="CP002685">
    <property type="protein sequence ID" value="ANM62816.1"/>
    <property type="molecule type" value="Genomic_DNA"/>
</dbReference>
<dbReference type="EMBL" id="CP002685">
    <property type="protein sequence ID" value="ANM62817.1"/>
    <property type="molecule type" value="Genomic_DNA"/>
</dbReference>
<dbReference type="EMBL" id="CP002685">
    <property type="protein sequence ID" value="ANM62818.1"/>
    <property type="molecule type" value="Genomic_DNA"/>
</dbReference>
<dbReference type="EMBL" id="CP002685">
    <property type="protein sequence ID" value="ANM62819.1"/>
    <property type="molecule type" value="Genomic_DNA"/>
</dbReference>
<dbReference type="EMBL" id="CP002685">
    <property type="protein sequence ID" value="ANM62820.1"/>
    <property type="molecule type" value="Genomic_DNA"/>
</dbReference>
<dbReference type="EMBL" id="CP002685">
    <property type="protein sequence ID" value="ANM62821.1"/>
    <property type="molecule type" value="Genomic_DNA"/>
</dbReference>
<dbReference type="EMBL" id="BT024893">
    <property type="protein sequence ID" value="ABD85164.1"/>
    <property type="molecule type" value="mRNA"/>
</dbReference>
<dbReference type="EMBL" id="AK230305">
    <property type="protein sequence ID" value="BAF02106.1"/>
    <property type="molecule type" value="mRNA"/>
</dbReference>
<dbReference type="PIR" id="B84712">
    <property type="entry name" value="B84712"/>
</dbReference>
<dbReference type="RefSeq" id="NP_001318322.1">
    <property type="nucleotide sequence ID" value="NM_001336285.1"/>
</dbReference>
<dbReference type="RefSeq" id="NP_001324937.1">
    <property type="nucleotide sequence ID" value="NM_001336289.1"/>
</dbReference>
<dbReference type="RefSeq" id="NP_001324938.1">
    <property type="nucleotide sequence ID" value="NM_001336288.1"/>
</dbReference>
<dbReference type="RefSeq" id="NP_001324939.1">
    <property type="nucleotide sequence ID" value="NM_001336287.1"/>
</dbReference>
<dbReference type="RefSeq" id="NP_001324940.1">
    <property type="nucleotide sequence ID" value="NM_001336291.1"/>
</dbReference>
<dbReference type="RefSeq" id="NP_001324941.1">
    <property type="nucleotide sequence ID" value="NM_001336286.1"/>
</dbReference>
<dbReference type="RefSeq" id="NP_001324942.1">
    <property type="nucleotide sequence ID" value="NM_001336290.1"/>
</dbReference>
<dbReference type="RefSeq" id="NP_001324943.1">
    <property type="nucleotide sequence ID" value="NM_001336297.1"/>
</dbReference>
<dbReference type="RefSeq" id="NP_001324944.1">
    <property type="nucleotide sequence ID" value="NM_001336296.1"/>
</dbReference>
<dbReference type="RefSeq" id="NP_001324945.1">
    <property type="nucleotide sequence ID" value="NM_001336295.1"/>
</dbReference>
<dbReference type="RefSeq" id="NP_001324946.1">
    <property type="nucleotide sequence ID" value="NM_001336294.1"/>
</dbReference>
<dbReference type="RefSeq" id="NP_001324947.1">
    <property type="nucleotide sequence ID" value="NM_001336293.1"/>
</dbReference>
<dbReference type="RefSeq" id="NP_001324948.1">
    <property type="nucleotide sequence ID" value="NM_001336292.1"/>
</dbReference>
<dbReference type="RefSeq" id="NP_001324949.1">
    <property type="nucleotide sequence ID" value="NM_001336299.1"/>
</dbReference>
<dbReference type="RefSeq" id="NP_001324950.1">
    <property type="nucleotide sequence ID" value="NM_001336298.1"/>
</dbReference>
<dbReference type="SMR" id="O49339"/>
<dbReference type="BioGRID" id="2974">
    <property type="interactions" value="5"/>
</dbReference>
<dbReference type="FunCoup" id="O49339">
    <property type="interactions" value="218"/>
</dbReference>
<dbReference type="STRING" id="3702.O49339"/>
<dbReference type="iPTMnet" id="O49339"/>
<dbReference type="SwissPalm" id="O49339"/>
<dbReference type="PaxDb" id="3702-AT2G30740.1"/>
<dbReference type="ProteomicsDB" id="226171"/>
<dbReference type="EnsemblPlants" id="AT2G30740.1">
    <property type="protein sequence ID" value="AT2G30740.1"/>
    <property type="gene ID" value="AT2G30740"/>
</dbReference>
<dbReference type="EnsemblPlants" id="AT2G30740.10">
    <property type="protein sequence ID" value="AT2G30740.10"/>
    <property type="gene ID" value="AT2G30740"/>
</dbReference>
<dbReference type="EnsemblPlants" id="AT2G30740.11">
    <property type="protein sequence ID" value="AT2G30740.11"/>
    <property type="gene ID" value="AT2G30740"/>
</dbReference>
<dbReference type="EnsemblPlants" id="AT2G30740.12">
    <property type="protein sequence ID" value="AT2G30740.12"/>
    <property type="gene ID" value="AT2G30740"/>
</dbReference>
<dbReference type="EnsemblPlants" id="AT2G30740.13">
    <property type="protein sequence ID" value="AT2G30740.13"/>
    <property type="gene ID" value="AT2G30740"/>
</dbReference>
<dbReference type="EnsemblPlants" id="AT2G30740.14">
    <property type="protein sequence ID" value="AT2G30740.14"/>
    <property type="gene ID" value="AT2G30740"/>
</dbReference>
<dbReference type="EnsemblPlants" id="AT2G30740.15">
    <property type="protein sequence ID" value="AT2G30740.15"/>
    <property type="gene ID" value="AT2G30740"/>
</dbReference>
<dbReference type="EnsemblPlants" id="AT2G30740.2">
    <property type="protein sequence ID" value="AT2G30740.2"/>
    <property type="gene ID" value="AT2G30740"/>
</dbReference>
<dbReference type="EnsemblPlants" id="AT2G30740.3">
    <property type="protein sequence ID" value="AT2G30740.3"/>
    <property type="gene ID" value="AT2G30740"/>
</dbReference>
<dbReference type="EnsemblPlants" id="AT2G30740.4">
    <property type="protein sequence ID" value="AT2G30740.4"/>
    <property type="gene ID" value="AT2G30740"/>
</dbReference>
<dbReference type="EnsemblPlants" id="AT2G30740.5">
    <property type="protein sequence ID" value="AT2G30740.5"/>
    <property type="gene ID" value="AT2G30740"/>
</dbReference>
<dbReference type="EnsemblPlants" id="AT2G30740.6">
    <property type="protein sequence ID" value="AT2G30740.6"/>
    <property type="gene ID" value="AT2G30740"/>
</dbReference>
<dbReference type="EnsemblPlants" id="AT2G30740.7">
    <property type="protein sequence ID" value="AT2G30740.7"/>
    <property type="gene ID" value="AT2G30740"/>
</dbReference>
<dbReference type="EnsemblPlants" id="AT2G30740.8">
    <property type="protein sequence ID" value="AT2G30740.8"/>
    <property type="gene ID" value="AT2G30740"/>
</dbReference>
<dbReference type="EnsemblPlants" id="AT2G30740.9">
    <property type="protein sequence ID" value="AT2G30740.9"/>
    <property type="gene ID" value="AT2G30740"/>
</dbReference>
<dbReference type="GeneID" id="817625"/>
<dbReference type="Gramene" id="AT2G30740.1">
    <property type="protein sequence ID" value="AT2G30740.1"/>
    <property type="gene ID" value="AT2G30740"/>
</dbReference>
<dbReference type="Gramene" id="AT2G30740.10">
    <property type="protein sequence ID" value="AT2G30740.10"/>
    <property type="gene ID" value="AT2G30740"/>
</dbReference>
<dbReference type="Gramene" id="AT2G30740.11">
    <property type="protein sequence ID" value="AT2G30740.11"/>
    <property type="gene ID" value="AT2G30740"/>
</dbReference>
<dbReference type="Gramene" id="AT2G30740.12">
    <property type="protein sequence ID" value="AT2G30740.12"/>
    <property type="gene ID" value="AT2G30740"/>
</dbReference>
<dbReference type="Gramene" id="AT2G30740.13">
    <property type="protein sequence ID" value="AT2G30740.13"/>
    <property type="gene ID" value="AT2G30740"/>
</dbReference>
<dbReference type="Gramene" id="AT2G30740.14">
    <property type="protein sequence ID" value="AT2G30740.14"/>
    <property type="gene ID" value="AT2G30740"/>
</dbReference>
<dbReference type="Gramene" id="AT2G30740.15">
    <property type="protein sequence ID" value="AT2G30740.15"/>
    <property type="gene ID" value="AT2G30740"/>
</dbReference>
<dbReference type="Gramene" id="AT2G30740.2">
    <property type="protein sequence ID" value="AT2G30740.2"/>
    <property type="gene ID" value="AT2G30740"/>
</dbReference>
<dbReference type="Gramene" id="AT2G30740.3">
    <property type="protein sequence ID" value="AT2G30740.3"/>
    <property type="gene ID" value="AT2G30740"/>
</dbReference>
<dbReference type="Gramene" id="AT2G30740.4">
    <property type="protein sequence ID" value="AT2G30740.4"/>
    <property type="gene ID" value="AT2G30740"/>
</dbReference>
<dbReference type="Gramene" id="AT2G30740.5">
    <property type="protein sequence ID" value="AT2G30740.5"/>
    <property type="gene ID" value="AT2G30740"/>
</dbReference>
<dbReference type="Gramene" id="AT2G30740.6">
    <property type="protein sequence ID" value="AT2G30740.6"/>
    <property type="gene ID" value="AT2G30740"/>
</dbReference>
<dbReference type="Gramene" id="AT2G30740.7">
    <property type="protein sequence ID" value="AT2G30740.7"/>
    <property type="gene ID" value="AT2G30740"/>
</dbReference>
<dbReference type="Gramene" id="AT2G30740.8">
    <property type="protein sequence ID" value="AT2G30740.8"/>
    <property type="gene ID" value="AT2G30740"/>
</dbReference>
<dbReference type="Gramene" id="AT2G30740.9">
    <property type="protein sequence ID" value="AT2G30740.9"/>
    <property type="gene ID" value="AT2G30740"/>
</dbReference>
<dbReference type="KEGG" id="ath:AT2G30740"/>
<dbReference type="Araport" id="AT2G30740"/>
<dbReference type="TAIR" id="AT2G30740"/>
<dbReference type="eggNOG" id="KOG1187">
    <property type="taxonomic scope" value="Eukaryota"/>
</dbReference>
<dbReference type="HOGENOM" id="CLU_000288_21_4_1"/>
<dbReference type="InParanoid" id="O49339"/>
<dbReference type="OMA" id="WQQSDAN"/>
<dbReference type="PhylomeDB" id="O49339"/>
<dbReference type="PRO" id="PR:O49339"/>
<dbReference type="Proteomes" id="UP000006548">
    <property type="component" value="Chromosome 2"/>
</dbReference>
<dbReference type="ExpressionAtlas" id="O49339">
    <property type="expression patterns" value="baseline and differential"/>
</dbReference>
<dbReference type="GO" id="GO:0005777">
    <property type="term" value="C:peroxisome"/>
    <property type="evidence" value="ECO:0007005"/>
    <property type="project" value="TAIR"/>
</dbReference>
<dbReference type="GO" id="GO:0009506">
    <property type="term" value="C:plasmodesma"/>
    <property type="evidence" value="ECO:0007005"/>
    <property type="project" value="TAIR"/>
</dbReference>
<dbReference type="GO" id="GO:0005524">
    <property type="term" value="F:ATP binding"/>
    <property type="evidence" value="ECO:0007669"/>
    <property type="project" value="UniProtKB-KW"/>
</dbReference>
<dbReference type="GO" id="GO:0004715">
    <property type="term" value="F:non-membrane spanning protein tyrosine kinase activity"/>
    <property type="evidence" value="ECO:0007669"/>
    <property type="project" value="UniProtKB-EC"/>
</dbReference>
<dbReference type="GO" id="GO:0019901">
    <property type="term" value="F:protein kinase binding"/>
    <property type="evidence" value="ECO:0000353"/>
    <property type="project" value="UniProtKB"/>
</dbReference>
<dbReference type="GO" id="GO:0006952">
    <property type="term" value="P:defense response"/>
    <property type="evidence" value="ECO:0007669"/>
    <property type="project" value="UniProtKB-KW"/>
</dbReference>
<dbReference type="FunFam" id="1.10.510.10:FF:000103">
    <property type="entry name" value="PTI1-like tyrosine-protein kinase 3"/>
    <property type="match status" value="1"/>
</dbReference>
<dbReference type="FunFam" id="3.30.200.20:FF:000182">
    <property type="entry name" value="PTI1-like tyrosine-protein kinase 3"/>
    <property type="match status" value="1"/>
</dbReference>
<dbReference type="Gene3D" id="3.30.200.20">
    <property type="entry name" value="Phosphorylase Kinase, domain 1"/>
    <property type="match status" value="1"/>
</dbReference>
<dbReference type="Gene3D" id="1.10.510.10">
    <property type="entry name" value="Transferase(Phosphotransferase) domain 1"/>
    <property type="match status" value="1"/>
</dbReference>
<dbReference type="InterPro" id="IPR011009">
    <property type="entry name" value="Kinase-like_dom_sf"/>
</dbReference>
<dbReference type="InterPro" id="IPR052101">
    <property type="entry name" value="Plant_StressResp_Kinase"/>
</dbReference>
<dbReference type="InterPro" id="IPR000719">
    <property type="entry name" value="Prot_kinase_dom"/>
</dbReference>
<dbReference type="InterPro" id="IPR017441">
    <property type="entry name" value="Protein_kinase_ATP_BS"/>
</dbReference>
<dbReference type="InterPro" id="IPR001245">
    <property type="entry name" value="Ser-Thr/Tyr_kinase_cat_dom"/>
</dbReference>
<dbReference type="InterPro" id="IPR008266">
    <property type="entry name" value="Tyr_kinase_AS"/>
</dbReference>
<dbReference type="InterPro" id="IPR020635">
    <property type="entry name" value="Tyr_kinase_cat_dom"/>
</dbReference>
<dbReference type="PANTHER" id="PTHR47983:SF12">
    <property type="entry name" value="PTI1-LIKE TYROSINE-PROTEIN KINASE 2-RELATED"/>
    <property type="match status" value="1"/>
</dbReference>
<dbReference type="PANTHER" id="PTHR47983">
    <property type="entry name" value="PTO-INTERACTING PROTEIN 1-LIKE"/>
    <property type="match status" value="1"/>
</dbReference>
<dbReference type="Pfam" id="PF07714">
    <property type="entry name" value="PK_Tyr_Ser-Thr"/>
    <property type="match status" value="1"/>
</dbReference>
<dbReference type="SMART" id="SM00219">
    <property type="entry name" value="TyrKc"/>
    <property type="match status" value="1"/>
</dbReference>
<dbReference type="SUPFAM" id="SSF56112">
    <property type="entry name" value="Protein kinase-like (PK-like)"/>
    <property type="match status" value="1"/>
</dbReference>
<dbReference type="PROSITE" id="PS00107">
    <property type="entry name" value="PROTEIN_KINASE_ATP"/>
    <property type="match status" value="1"/>
</dbReference>
<dbReference type="PROSITE" id="PS50011">
    <property type="entry name" value="PROTEIN_KINASE_DOM"/>
    <property type="match status" value="1"/>
</dbReference>
<dbReference type="PROSITE" id="PS00109">
    <property type="entry name" value="PROTEIN_KINASE_TYR"/>
    <property type="match status" value="1"/>
</dbReference>
<gene>
    <name type="primary">PTI12</name>
    <name type="ordered locus">At2g30740</name>
    <name type="ORF">T11J7.13</name>
</gene>
<name>PTI12_ARATH</name>
<evidence type="ECO:0000255" key="1">
    <source>
        <dbReference type="PROSITE-ProRule" id="PRU00159"/>
    </source>
</evidence>
<evidence type="ECO:0000255" key="2">
    <source>
        <dbReference type="PROSITE-ProRule" id="PRU10028"/>
    </source>
</evidence>
<evidence type="ECO:0000256" key="3">
    <source>
        <dbReference type="SAM" id="MobiDB-lite"/>
    </source>
</evidence>
<evidence type="ECO:0000269" key="4">
    <source>
    </source>
</evidence>
<evidence type="ECO:0000305" key="5"/>
<comment type="function">
    <text evidence="4">Probable tyrosine-protein kinase involved in oxidative burst-mediated signaling leading to specific genes expression.</text>
</comment>
<comment type="catalytic activity">
    <reaction evidence="2">
        <text>L-tyrosyl-[protein] + ATP = O-phospho-L-tyrosyl-[protein] + ADP + H(+)</text>
        <dbReference type="Rhea" id="RHEA:10596"/>
        <dbReference type="Rhea" id="RHEA-COMP:10136"/>
        <dbReference type="Rhea" id="RHEA-COMP:20101"/>
        <dbReference type="ChEBI" id="CHEBI:15378"/>
        <dbReference type="ChEBI" id="CHEBI:30616"/>
        <dbReference type="ChEBI" id="CHEBI:46858"/>
        <dbReference type="ChEBI" id="CHEBI:61978"/>
        <dbReference type="ChEBI" id="CHEBI:456216"/>
        <dbReference type="EC" id="2.7.10.2"/>
    </reaction>
</comment>
<comment type="activity regulation">
    <text evidence="4">Strongly activated in response to phosphatidic acid (PA) and xylanase in a OXI1- and PDK1-dependent manner, and, to a lesser extent, by hydrogen peroxide and flagellin in a OXI1-dependent manner.</text>
</comment>
<comment type="subunit">
    <text evidence="4">Interacts with OXI1.</text>
</comment>
<comment type="PTM">
    <text evidence="4">Autophosphorylated and phosphorylated by OXI1.</text>
</comment>
<comment type="similarity">
    <text evidence="1">Belongs to the protein kinase superfamily. Tyr protein kinase family.</text>
</comment>
<comment type="online information" name="Arabidopsis protein tyrosine kinases">
    <link uri="http://www.bio.unipd.it/molbinfo/PTKtable.html"/>
</comment>
<accession>O49339</accession>
<feature type="chain" id="PRO_0000403323" description="PTI1-like tyrosine-protein kinase 2">
    <location>
        <begin position="1"/>
        <end position="366"/>
    </location>
</feature>
<feature type="domain" description="Protein kinase" evidence="1">
    <location>
        <begin position="71"/>
        <end position="353"/>
    </location>
</feature>
<feature type="region of interest" description="Disordered" evidence="3">
    <location>
        <begin position="8"/>
        <end position="50"/>
    </location>
</feature>
<feature type="compositionally biased region" description="Basic and acidic residues" evidence="3">
    <location>
        <begin position="8"/>
        <end position="23"/>
    </location>
</feature>
<feature type="compositionally biased region" description="Polar residues" evidence="3">
    <location>
        <begin position="26"/>
        <end position="39"/>
    </location>
</feature>
<feature type="active site" description="Proton acceptor" evidence="1 2">
    <location>
        <position position="203"/>
    </location>
</feature>
<feature type="binding site" evidence="1">
    <location>
        <begin position="77"/>
        <end position="85"/>
    </location>
    <ligand>
        <name>ATP</name>
        <dbReference type="ChEBI" id="CHEBI:30616"/>
    </ligand>
</feature>
<feature type="binding site" evidence="5">
    <location>
        <position position="99"/>
    </location>
    <ligand>
        <name>ATP</name>
        <dbReference type="ChEBI" id="CHEBI:30616"/>
    </ligand>
</feature>
<feature type="mutagenesis site" description="Reduced phosphorylation and impaired kinase activity. No phosphorylation; when associated with A-238." evidence="4">
    <original>K</original>
    <variation>N</variation>
    <location>
        <position position="99"/>
    </location>
</feature>
<feature type="mutagenesis site" description="No phosphorylation; when associated with N-99." evidence="4">
    <original>T</original>
    <variation>A</variation>
    <location>
        <position position="238"/>
    </location>
</feature>